<feature type="chain" id="PRO_0000147280" description="Dihydroorotase">
    <location>
        <begin position="1"/>
        <end position="390"/>
    </location>
</feature>
<feature type="active site" evidence="1">
    <location>
        <position position="259"/>
    </location>
</feature>
<feature type="binding site" evidence="1">
    <location>
        <position position="54"/>
    </location>
    <ligand>
        <name>Zn(2+)</name>
        <dbReference type="ChEBI" id="CHEBI:29105"/>
        <label>1</label>
    </ligand>
</feature>
<feature type="binding site" evidence="1">
    <location>
        <begin position="56"/>
        <end position="58"/>
    </location>
    <ligand>
        <name>substrate</name>
    </ligand>
</feature>
<feature type="binding site" evidence="1">
    <location>
        <position position="56"/>
    </location>
    <ligand>
        <name>Zn(2+)</name>
        <dbReference type="ChEBI" id="CHEBI:29105"/>
        <label>1</label>
    </ligand>
</feature>
<feature type="binding site" evidence="1">
    <location>
        <position position="88"/>
    </location>
    <ligand>
        <name>substrate</name>
    </ligand>
</feature>
<feature type="binding site" evidence="1">
    <location>
        <position position="136"/>
    </location>
    <ligand>
        <name>Zn(2+)</name>
        <dbReference type="ChEBI" id="CHEBI:29105"/>
        <label>1</label>
    </ligand>
</feature>
<feature type="binding site" evidence="1">
    <location>
        <position position="136"/>
    </location>
    <ligand>
        <name>Zn(2+)</name>
        <dbReference type="ChEBI" id="CHEBI:29105"/>
        <label>2</label>
    </ligand>
</feature>
<feature type="binding site" evidence="1">
    <location>
        <position position="160"/>
    </location>
    <ligand>
        <name>Zn(2+)</name>
        <dbReference type="ChEBI" id="CHEBI:29105"/>
        <label>2</label>
    </ligand>
</feature>
<feature type="binding site" evidence="1">
    <location>
        <position position="197"/>
    </location>
    <ligand>
        <name>Zn(2+)</name>
        <dbReference type="ChEBI" id="CHEBI:29105"/>
        <label>2</label>
    </ligand>
</feature>
<feature type="binding site" evidence="1">
    <location>
        <position position="259"/>
    </location>
    <ligand>
        <name>Zn(2+)</name>
        <dbReference type="ChEBI" id="CHEBI:29105"/>
        <label>1</label>
    </ligand>
</feature>
<feature type="binding site" evidence="1">
    <location>
        <position position="263"/>
    </location>
    <ligand>
        <name>substrate</name>
    </ligand>
</feature>
<feature type="binding site" evidence="1">
    <location>
        <begin position="277"/>
        <end position="278"/>
    </location>
    <ligand>
        <name>substrate</name>
    </ligand>
</feature>
<feature type="modified residue" description="N6-carboxylysine" evidence="1">
    <location>
        <position position="136"/>
    </location>
</feature>
<sequence>MMILWIMGKAYLSKEIRDVCINFDRRIKEIKSICKPDIALPKGTLILPGAIDLHTHIRGLKLAYKEDVVSGTSEASYGGITLIGDMPNSVPFVNTMETITAKLREFEYYSRVDYFVYSGVTKDLKKVDKFPIAGYKIFPEDLEKEETLEVLKSMKLKILHPEVPLALRGNRKLRLNIWYEIGALYYVKGYQNVHITHATNIRTVRLAKELGFTVDITPHHLLVDREKECLTKVNPPIRDTNERLWLLQAINEVDTVVSDHAPHASFEKQQPYEICPPGIAALSFTVPFILTLVSKGIISIDRAVELISTNPARILNIPYGEIKENNYANFTIIQFKDWRYSTKYSKVIETPLDGFPLRASIYMTIIQGKVGSLEGEVFPVKGINPFGENK</sequence>
<dbReference type="EC" id="3.5.2.3" evidence="1"/>
<dbReference type="EMBL" id="Y18930">
    <property type="protein sequence ID" value="CAB57689.1"/>
    <property type="molecule type" value="Genomic_DNA"/>
</dbReference>
<dbReference type="EMBL" id="AE006641">
    <property type="protein sequence ID" value="AAK40922.1"/>
    <property type="molecule type" value="Genomic_DNA"/>
</dbReference>
<dbReference type="PIR" id="C90208">
    <property type="entry name" value="C90208"/>
</dbReference>
<dbReference type="SMR" id="Q9UX05"/>
<dbReference type="FunCoup" id="Q9UX05">
    <property type="interactions" value="101"/>
</dbReference>
<dbReference type="STRING" id="273057.SSO0611"/>
<dbReference type="PaxDb" id="273057-SSO0611"/>
<dbReference type="EnsemblBacteria" id="AAK40922">
    <property type="protein sequence ID" value="AAK40922"/>
    <property type="gene ID" value="SSO0611"/>
</dbReference>
<dbReference type="KEGG" id="sso:SSO0611"/>
<dbReference type="PATRIC" id="fig|273057.12.peg.619"/>
<dbReference type="eggNOG" id="arCOG00689">
    <property type="taxonomic scope" value="Archaea"/>
</dbReference>
<dbReference type="HOGENOM" id="CLU_015572_1_1_2"/>
<dbReference type="InParanoid" id="Q9UX05"/>
<dbReference type="PhylomeDB" id="Q9UX05"/>
<dbReference type="UniPathway" id="UPA00070">
    <property type="reaction ID" value="UER00117"/>
</dbReference>
<dbReference type="Proteomes" id="UP000001974">
    <property type="component" value="Chromosome"/>
</dbReference>
<dbReference type="GO" id="GO:0005737">
    <property type="term" value="C:cytoplasm"/>
    <property type="evidence" value="ECO:0000318"/>
    <property type="project" value="GO_Central"/>
</dbReference>
<dbReference type="GO" id="GO:0004038">
    <property type="term" value="F:allantoinase activity"/>
    <property type="evidence" value="ECO:0000318"/>
    <property type="project" value="GO_Central"/>
</dbReference>
<dbReference type="GO" id="GO:0004151">
    <property type="term" value="F:dihydroorotase activity"/>
    <property type="evidence" value="ECO:0007669"/>
    <property type="project" value="UniProtKB-UniRule"/>
</dbReference>
<dbReference type="GO" id="GO:0008270">
    <property type="term" value="F:zinc ion binding"/>
    <property type="evidence" value="ECO:0007669"/>
    <property type="project" value="UniProtKB-UniRule"/>
</dbReference>
<dbReference type="GO" id="GO:0044205">
    <property type="term" value="P:'de novo' UMP biosynthetic process"/>
    <property type="evidence" value="ECO:0007669"/>
    <property type="project" value="UniProtKB-UniRule"/>
</dbReference>
<dbReference type="GO" id="GO:0006145">
    <property type="term" value="P:purine nucleobase catabolic process"/>
    <property type="evidence" value="ECO:0000318"/>
    <property type="project" value="GO_Central"/>
</dbReference>
<dbReference type="CDD" id="cd01318">
    <property type="entry name" value="DHOase_IIb"/>
    <property type="match status" value="1"/>
</dbReference>
<dbReference type="Gene3D" id="3.20.20.140">
    <property type="entry name" value="Metal-dependent hydrolases"/>
    <property type="match status" value="1"/>
</dbReference>
<dbReference type="HAMAP" id="MF_00220_A">
    <property type="entry name" value="PyrC_classI_A"/>
    <property type="match status" value="1"/>
</dbReference>
<dbReference type="InterPro" id="IPR006680">
    <property type="entry name" value="Amidohydro-rel"/>
</dbReference>
<dbReference type="InterPro" id="IPR004722">
    <property type="entry name" value="DHOase"/>
</dbReference>
<dbReference type="InterPro" id="IPR050138">
    <property type="entry name" value="DHOase/Allantoinase_Hydrolase"/>
</dbReference>
<dbReference type="InterPro" id="IPR002195">
    <property type="entry name" value="Dihydroorotase_CS"/>
</dbReference>
<dbReference type="InterPro" id="IPR011059">
    <property type="entry name" value="Metal-dep_hydrolase_composite"/>
</dbReference>
<dbReference type="InterPro" id="IPR032466">
    <property type="entry name" value="Metal_Hydrolase"/>
</dbReference>
<dbReference type="NCBIfam" id="NF001541">
    <property type="entry name" value="PRK00369.1"/>
    <property type="match status" value="1"/>
</dbReference>
<dbReference type="PANTHER" id="PTHR43668">
    <property type="entry name" value="ALLANTOINASE"/>
    <property type="match status" value="1"/>
</dbReference>
<dbReference type="PANTHER" id="PTHR43668:SF2">
    <property type="entry name" value="ALLANTOINASE"/>
    <property type="match status" value="1"/>
</dbReference>
<dbReference type="Pfam" id="PF01979">
    <property type="entry name" value="Amidohydro_1"/>
    <property type="match status" value="1"/>
</dbReference>
<dbReference type="SUPFAM" id="SSF51338">
    <property type="entry name" value="Composite domain of metallo-dependent hydrolases"/>
    <property type="match status" value="1"/>
</dbReference>
<dbReference type="SUPFAM" id="SSF51556">
    <property type="entry name" value="Metallo-dependent hydrolases"/>
    <property type="match status" value="1"/>
</dbReference>
<dbReference type="PROSITE" id="PS00483">
    <property type="entry name" value="DIHYDROOROTASE_2"/>
    <property type="match status" value="1"/>
</dbReference>
<name>PYRC_SACS2</name>
<keyword id="KW-0378">Hydrolase</keyword>
<keyword id="KW-0479">Metal-binding</keyword>
<keyword id="KW-0665">Pyrimidine biosynthesis</keyword>
<keyword id="KW-1185">Reference proteome</keyword>
<keyword id="KW-0862">Zinc</keyword>
<gene>
    <name evidence="1" type="primary">pyrC</name>
    <name type="ordered locus">SSO0611</name>
    <name type="ORF">C08_039</name>
</gene>
<organism>
    <name type="scientific">Saccharolobus solfataricus (strain ATCC 35092 / DSM 1617 / JCM 11322 / P2)</name>
    <name type="common">Sulfolobus solfataricus</name>
    <dbReference type="NCBI Taxonomy" id="273057"/>
    <lineage>
        <taxon>Archaea</taxon>
        <taxon>Thermoproteota</taxon>
        <taxon>Thermoprotei</taxon>
        <taxon>Sulfolobales</taxon>
        <taxon>Sulfolobaceae</taxon>
        <taxon>Saccharolobus</taxon>
    </lineage>
</organism>
<proteinExistence type="inferred from homology"/>
<reference key="1">
    <citation type="journal article" date="2000" name="Genome">
        <title>Gene content and organization of a 281-kbp contig from the genome of the extremely thermophilic archaeon, Sulfolobus solfataricus P2.</title>
        <authorList>
            <person name="Charlebois R.L."/>
            <person name="Singh R.K."/>
            <person name="Chan-Weiher C.C.-Y."/>
            <person name="Allard G."/>
            <person name="Chow C."/>
            <person name="Confalonieri F."/>
            <person name="Curtis B."/>
            <person name="Duguet M."/>
            <person name="Erauso G."/>
            <person name="Faguy D."/>
            <person name="Gaasterland T."/>
            <person name="Garrett R.A."/>
            <person name="Gordon P."/>
            <person name="Jeffries A.C."/>
            <person name="Kozera C."/>
            <person name="Kushwaha N."/>
            <person name="Lafleur E."/>
            <person name="Medina N."/>
            <person name="Peng X."/>
            <person name="Penny S.L."/>
            <person name="She Q."/>
            <person name="St Jean A."/>
            <person name="van der Oost J."/>
            <person name="Young F."/>
            <person name="Zivanovic Y."/>
            <person name="Doolittle W.F."/>
            <person name="Ragan M.A."/>
            <person name="Sensen C.W."/>
        </authorList>
    </citation>
    <scope>NUCLEOTIDE SEQUENCE [LARGE SCALE GENOMIC DNA]</scope>
    <source>
        <strain>ATCC 35092 / DSM 1617 / JCM 11322 / P2</strain>
    </source>
</reference>
<reference key="2">
    <citation type="journal article" date="2001" name="Proc. Natl. Acad. Sci. U.S.A.">
        <title>The complete genome of the crenarchaeon Sulfolobus solfataricus P2.</title>
        <authorList>
            <person name="She Q."/>
            <person name="Singh R.K."/>
            <person name="Confalonieri F."/>
            <person name="Zivanovic Y."/>
            <person name="Allard G."/>
            <person name="Awayez M.J."/>
            <person name="Chan-Weiher C.C.-Y."/>
            <person name="Clausen I.G."/>
            <person name="Curtis B.A."/>
            <person name="De Moors A."/>
            <person name="Erauso G."/>
            <person name="Fletcher C."/>
            <person name="Gordon P.M.K."/>
            <person name="Heikamp-de Jong I."/>
            <person name="Jeffries A.C."/>
            <person name="Kozera C.J."/>
            <person name="Medina N."/>
            <person name="Peng X."/>
            <person name="Thi-Ngoc H.P."/>
            <person name="Redder P."/>
            <person name="Schenk M.E."/>
            <person name="Theriault C."/>
            <person name="Tolstrup N."/>
            <person name="Charlebois R.L."/>
            <person name="Doolittle W.F."/>
            <person name="Duguet M."/>
            <person name="Gaasterland T."/>
            <person name="Garrett R.A."/>
            <person name="Ragan M.A."/>
            <person name="Sensen C.W."/>
            <person name="Van der Oost J."/>
        </authorList>
    </citation>
    <scope>NUCLEOTIDE SEQUENCE [LARGE SCALE GENOMIC DNA]</scope>
    <source>
        <strain>ATCC 35092 / DSM 1617 / JCM 11322 / P2</strain>
    </source>
</reference>
<protein>
    <recommendedName>
        <fullName evidence="1">Dihydroorotase</fullName>
        <shortName evidence="1">DHOase</shortName>
        <ecNumber evidence="1">3.5.2.3</ecNumber>
    </recommendedName>
</protein>
<evidence type="ECO:0000255" key="1">
    <source>
        <dbReference type="HAMAP-Rule" id="MF_00220"/>
    </source>
</evidence>
<accession>Q9UX05</accession>
<comment type="function">
    <text evidence="1">Catalyzes the reversible cyclization of carbamoyl aspartate to dihydroorotate.</text>
</comment>
<comment type="catalytic activity">
    <reaction evidence="1">
        <text>(S)-dihydroorotate + H2O = N-carbamoyl-L-aspartate + H(+)</text>
        <dbReference type="Rhea" id="RHEA:24296"/>
        <dbReference type="ChEBI" id="CHEBI:15377"/>
        <dbReference type="ChEBI" id="CHEBI:15378"/>
        <dbReference type="ChEBI" id="CHEBI:30864"/>
        <dbReference type="ChEBI" id="CHEBI:32814"/>
        <dbReference type="EC" id="3.5.2.3"/>
    </reaction>
</comment>
<comment type="cofactor">
    <cofactor evidence="1">
        <name>Zn(2+)</name>
        <dbReference type="ChEBI" id="CHEBI:29105"/>
    </cofactor>
    <text evidence="1">Binds 2 Zn(2+) ions per subunit.</text>
</comment>
<comment type="pathway">
    <text evidence="1">Pyrimidine metabolism; UMP biosynthesis via de novo pathway; (S)-dihydroorotate from bicarbonate: step 3/3.</text>
</comment>
<comment type="similarity">
    <text evidence="1">Belongs to the metallo-dependent hydrolases superfamily. DHOase family. Class I DHOase subfamily.</text>
</comment>